<protein>
    <recommendedName>
        <fullName evidence="4">Eukaryotic peptide chain release factor subunit 1-2</fullName>
        <shortName evidence="4">Eukaryotic release factor 1-2</shortName>
        <shortName evidence="4">eRF1-2</shortName>
    </recommendedName>
    <alternativeName>
        <fullName>Omnipotent suppressor protein 1 homolog 2</fullName>
        <shortName>SUP1 homolog 2</shortName>
    </alternativeName>
</protein>
<dbReference type="EMBL" id="AC012187">
    <property type="protein sequence ID" value="AAF78496.1"/>
    <property type="molecule type" value="Genomic_DNA"/>
</dbReference>
<dbReference type="EMBL" id="CP002684">
    <property type="protein sequence ID" value="AEE28949.1"/>
    <property type="molecule type" value="Genomic_DNA"/>
</dbReference>
<dbReference type="EMBL" id="AY034963">
    <property type="protein sequence ID" value="AAK59469.1"/>
    <property type="molecule type" value="mRNA"/>
</dbReference>
<dbReference type="EMBL" id="BT026125">
    <property type="protein sequence ID" value="ABG48481.1"/>
    <property type="molecule type" value="mRNA"/>
</dbReference>
<dbReference type="EMBL" id="AY086623">
    <property type="protein sequence ID" value="AAM63682.1"/>
    <property type="molecule type" value="mRNA"/>
</dbReference>
<dbReference type="EMBL" id="X69374">
    <property type="protein sequence ID" value="CAA49171.1"/>
    <property type="molecule type" value="mRNA"/>
</dbReference>
<dbReference type="EMBL" id="U40218">
    <property type="protein sequence ID" value="AAA91170.1"/>
    <property type="molecule type" value="mRNA"/>
</dbReference>
<dbReference type="EMBL" id="Z18188">
    <property type="protein sequence ID" value="CAA79125.1"/>
    <property type="molecule type" value="mRNA"/>
</dbReference>
<dbReference type="PIR" id="H86262">
    <property type="entry name" value="H86262"/>
</dbReference>
<dbReference type="PIR" id="S31445">
    <property type="entry name" value="S31445"/>
</dbReference>
<dbReference type="RefSeq" id="NP_172752.1">
    <property type="nucleotide sequence ID" value="NM_101163.2"/>
</dbReference>
<dbReference type="SMR" id="Q9LPV8"/>
<dbReference type="BioGRID" id="23090">
    <property type="interactions" value="5"/>
</dbReference>
<dbReference type="FunCoup" id="Q9LPV8">
    <property type="interactions" value="4838"/>
</dbReference>
<dbReference type="IntAct" id="Q9LPV8">
    <property type="interactions" value="2"/>
</dbReference>
<dbReference type="STRING" id="3702.Q9LPV8"/>
<dbReference type="iPTMnet" id="Q9LPV8"/>
<dbReference type="PaxDb" id="3702-AT1G12920.1"/>
<dbReference type="ProteomicsDB" id="221811"/>
<dbReference type="EnsemblPlants" id="AT1G12920.1">
    <property type="protein sequence ID" value="AT1G12920.1"/>
    <property type="gene ID" value="AT1G12920"/>
</dbReference>
<dbReference type="GeneID" id="837850"/>
<dbReference type="Gramene" id="AT1G12920.1">
    <property type="protein sequence ID" value="AT1G12920.1"/>
    <property type="gene ID" value="AT1G12920"/>
</dbReference>
<dbReference type="KEGG" id="ath:AT1G12920"/>
<dbReference type="Araport" id="AT1G12920"/>
<dbReference type="TAIR" id="AT1G12920">
    <property type="gene designation" value="ERF1-2"/>
</dbReference>
<dbReference type="eggNOG" id="KOG0688">
    <property type="taxonomic scope" value="Eukaryota"/>
</dbReference>
<dbReference type="HOGENOM" id="CLU_035759_2_1_1"/>
<dbReference type="InParanoid" id="Q9LPV8"/>
<dbReference type="OMA" id="RYWARHN"/>
<dbReference type="OrthoDB" id="10254527at2759"/>
<dbReference type="PhylomeDB" id="Q9LPV8"/>
<dbReference type="CD-CODE" id="4299E36E">
    <property type="entry name" value="Nucleolus"/>
</dbReference>
<dbReference type="PRO" id="PR:Q9LPV8"/>
<dbReference type="Proteomes" id="UP000006548">
    <property type="component" value="Chromosome 1"/>
</dbReference>
<dbReference type="ExpressionAtlas" id="Q9LPV8">
    <property type="expression patterns" value="baseline and differential"/>
</dbReference>
<dbReference type="GO" id="GO:0005737">
    <property type="term" value="C:cytoplasm"/>
    <property type="evidence" value="ECO:0007669"/>
    <property type="project" value="UniProtKB-SubCell"/>
</dbReference>
<dbReference type="GO" id="GO:0005576">
    <property type="term" value="C:extracellular region"/>
    <property type="evidence" value="ECO:0007005"/>
    <property type="project" value="TAIR"/>
</dbReference>
<dbReference type="GO" id="GO:0003747">
    <property type="term" value="F:translation release factor activity"/>
    <property type="evidence" value="ECO:0000316"/>
    <property type="project" value="TAIR"/>
</dbReference>
<dbReference type="GO" id="GO:0006415">
    <property type="term" value="P:translational termination"/>
    <property type="evidence" value="ECO:0000316"/>
    <property type="project" value="TAIR"/>
</dbReference>
<dbReference type="FunFam" id="3.30.420.60:FF:000001">
    <property type="entry name" value="Eukaryotic peptide chain release factor subunit 1"/>
    <property type="match status" value="1"/>
</dbReference>
<dbReference type="FunFam" id="3.30.960.10:FF:000001">
    <property type="entry name" value="Eukaryotic peptide chain release factor subunit 1"/>
    <property type="match status" value="1"/>
</dbReference>
<dbReference type="FunFam" id="3.30.1330.30:FF:000006">
    <property type="entry name" value="Peptide chain release factor subunit 1"/>
    <property type="match status" value="1"/>
</dbReference>
<dbReference type="Gene3D" id="3.30.1330.30">
    <property type="match status" value="1"/>
</dbReference>
<dbReference type="Gene3D" id="3.30.960.10">
    <property type="entry name" value="eRF1 domain 1"/>
    <property type="match status" value="1"/>
</dbReference>
<dbReference type="Gene3D" id="3.30.420.60">
    <property type="entry name" value="eRF1 domain 2"/>
    <property type="match status" value="1"/>
</dbReference>
<dbReference type="InterPro" id="IPR042226">
    <property type="entry name" value="eFR1_2_sf"/>
</dbReference>
<dbReference type="InterPro" id="IPR005140">
    <property type="entry name" value="eRF1_1_Pelota"/>
</dbReference>
<dbReference type="InterPro" id="IPR024049">
    <property type="entry name" value="eRF1_1_sf"/>
</dbReference>
<dbReference type="InterPro" id="IPR005141">
    <property type="entry name" value="eRF1_2"/>
</dbReference>
<dbReference type="InterPro" id="IPR005142">
    <property type="entry name" value="eRF1_3"/>
</dbReference>
<dbReference type="InterPro" id="IPR004403">
    <property type="entry name" value="Peptide_chain-rel_eRF1/aRF1"/>
</dbReference>
<dbReference type="InterPro" id="IPR029064">
    <property type="entry name" value="Ribosomal_eL30-like_sf"/>
</dbReference>
<dbReference type="NCBIfam" id="TIGR03676">
    <property type="entry name" value="aRF1_eRF1"/>
    <property type="match status" value="1"/>
</dbReference>
<dbReference type="PANTHER" id="PTHR10113">
    <property type="entry name" value="PEPTIDE CHAIN RELEASE FACTOR SUBUNIT 1"/>
    <property type="match status" value="1"/>
</dbReference>
<dbReference type="Pfam" id="PF03463">
    <property type="entry name" value="eRF1_1"/>
    <property type="match status" value="1"/>
</dbReference>
<dbReference type="Pfam" id="PF03464">
    <property type="entry name" value="eRF1_2"/>
    <property type="match status" value="1"/>
</dbReference>
<dbReference type="Pfam" id="PF03465">
    <property type="entry name" value="eRF1_3"/>
    <property type="match status" value="1"/>
</dbReference>
<dbReference type="SMART" id="SM01194">
    <property type="entry name" value="eRF1_1"/>
    <property type="match status" value="1"/>
</dbReference>
<dbReference type="SUPFAM" id="SSF55315">
    <property type="entry name" value="L30e-like"/>
    <property type="match status" value="1"/>
</dbReference>
<dbReference type="SUPFAM" id="SSF55481">
    <property type="entry name" value="N-terminal domain of eukaryotic peptide chain release factor subunit 1, ERF1"/>
    <property type="match status" value="1"/>
</dbReference>
<dbReference type="SUPFAM" id="SSF53137">
    <property type="entry name" value="Translational machinery components"/>
    <property type="match status" value="1"/>
</dbReference>
<comment type="function">
    <text evidence="2 3">Directs the termination of nascent peptide synthesis (translation) in response to the termination codons UAA, UAG and UGA (PubMed:15474304). Modulates plant growth and development (PubMed:16113224).</text>
</comment>
<comment type="subunit">
    <text>Heterodimer of two subunits, one of which binds GTP.</text>
</comment>
<comment type="subcellular location">
    <subcellularLocation>
        <location>Cytoplasm</location>
    </subcellularLocation>
</comment>
<comment type="similarity">
    <text evidence="5">Belongs to the eukaryotic release factor 1 family.</text>
</comment>
<keyword id="KW-0007">Acetylation</keyword>
<keyword id="KW-0963">Cytoplasm</keyword>
<keyword id="KW-0341">Growth regulation</keyword>
<keyword id="KW-0648">Protein biosynthesis</keyword>
<keyword id="KW-1185">Reference proteome</keyword>
<gene>
    <name evidence="4" type="primary">ERF1-2</name>
    <name evidence="6" type="ordered locus">At1g12920</name>
    <name evidence="7" type="ORF">F13K23.17</name>
</gene>
<evidence type="ECO:0000269" key="1">
    <source>
    </source>
</evidence>
<evidence type="ECO:0000269" key="2">
    <source>
    </source>
</evidence>
<evidence type="ECO:0000303" key="3">
    <source>
    </source>
</evidence>
<evidence type="ECO:0000303" key="4">
    <source>
    </source>
</evidence>
<evidence type="ECO:0000305" key="5"/>
<evidence type="ECO:0000312" key="6">
    <source>
        <dbReference type="Araport" id="AT1G12920"/>
    </source>
</evidence>
<evidence type="ECO:0000312" key="7">
    <source>
        <dbReference type="EMBL" id="AAF78496.1"/>
    </source>
</evidence>
<evidence type="ECO:0007744" key="8">
    <source>
    </source>
</evidence>
<name>ERF1Y_ARATH</name>
<accession>Q9LPV8</accession>
<accession>Q147G8</accession>
<accession>Q39098</accession>
<accession>Q39223</accession>
<accession>Q41987</accession>
<reference key="1">
    <citation type="journal article" date="2000" name="Nature">
        <title>Sequence and analysis of chromosome 1 of the plant Arabidopsis thaliana.</title>
        <authorList>
            <person name="Theologis A."/>
            <person name="Ecker J.R."/>
            <person name="Palm C.J."/>
            <person name="Federspiel N.A."/>
            <person name="Kaul S."/>
            <person name="White O."/>
            <person name="Alonso J."/>
            <person name="Altafi H."/>
            <person name="Araujo R."/>
            <person name="Bowman C.L."/>
            <person name="Brooks S.Y."/>
            <person name="Buehler E."/>
            <person name="Chan A."/>
            <person name="Chao Q."/>
            <person name="Chen H."/>
            <person name="Cheuk R.F."/>
            <person name="Chin C.W."/>
            <person name="Chung M.K."/>
            <person name="Conn L."/>
            <person name="Conway A.B."/>
            <person name="Conway A.R."/>
            <person name="Creasy T.H."/>
            <person name="Dewar K."/>
            <person name="Dunn P."/>
            <person name="Etgu P."/>
            <person name="Feldblyum T.V."/>
            <person name="Feng J.-D."/>
            <person name="Fong B."/>
            <person name="Fujii C.Y."/>
            <person name="Gill J.E."/>
            <person name="Goldsmith A.D."/>
            <person name="Haas B."/>
            <person name="Hansen N.F."/>
            <person name="Hughes B."/>
            <person name="Huizar L."/>
            <person name="Hunter J.L."/>
            <person name="Jenkins J."/>
            <person name="Johnson-Hopson C."/>
            <person name="Khan S."/>
            <person name="Khaykin E."/>
            <person name="Kim C.J."/>
            <person name="Koo H.L."/>
            <person name="Kremenetskaia I."/>
            <person name="Kurtz D.B."/>
            <person name="Kwan A."/>
            <person name="Lam B."/>
            <person name="Langin-Hooper S."/>
            <person name="Lee A."/>
            <person name="Lee J.M."/>
            <person name="Lenz C.A."/>
            <person name="Li J.H."/>
            <person name="Li Y.-P."/>
            <person name="Lin X."/>
            <person name="Liu S.X."/>
            <person name="Liu Z.A."/>
            <person name="Luros J.S."/>
            <person name="Maiti R."/>
            <person name="Marziali A."/>
            <person name="Militscher J."/>
            <person name="Miranda M."/>
            <person name="Nguyen M."/>
            <person name="Nierman W.C."/>
            <person name="Osborne B.I."/>
            <person name="Pai G."/>
            <person name="Peterson J."/>
            <person name="Pham P.K."/>
            <person name="Rizzo M."/>
            <person name="Rooney T."/>
            <person name="Rowley D."/>
            <person name="Sakano H."/>
            <person name="Salzberg S.L."/>
            <person name="Schwartz J.R."/>
            <person name="Shinn P."/>
            <person name="Southwick A.M."/>
            <person name="Sun H."/>
            <person name="Tallon L.J."/>
            <person name="Tambunga G."/>
            <person name="Toriumi M.J."/>
            <person name="Town C.D."/>
            <person name="Utterback T."/>
            <person name="Van Aken S."/>
            <person name="Vaysberg M."/>
            <person name="Vysotskaia V.S."/>
            <person name="Walker M."/>
            <person name="Wu D."/>
            <person name="Yu G."/>
            <person name="Fraser C.M."/>
            <person name="Venter J.C."/>
            <person name="Davis R.W."/>
        </authorList>
    </citation>
    <scope>NUCLEOTIDE SEQUENCE [LARGE SCALE GENOMIC DNA]</scope>
    <source>
        <strain>cv. Columbia</strain>
    </source>
</reference>
<reference key="2">
    <citation type="journal article" date="2017" name="Plant J.">
        <title>Araport11: a complete reannotation of the Arabidopsis thaliana reference genome.</title>
        <authorList>
            <person name="Cheng C.Y."/>
            <person name="Krishnakumar V."/>
            <person name="Chan A.P."/>
            <person name="Thibaud-Nissen F."/>
            <person name="Schobel S."/>
            <person name="Town C.D."/>
        </authorList>
    </citation>
    <scope>GENOME REANNOTATION</scope>
    <source>
        <strain>cv. Columbia</strain>
    </source>
</reference>
<reference key="3">
    <citation type="journal article" date="2003" name="Science">
        <title>Empirical analysis of transcriptional activity in the Arabidopsis genome.</title>
        <authorList>
            <person name="Yamada K."/>
            <person name="Lim J."/>
            <person name="Dale J.M."/>
            <person name="Chen H."/>
            <person name="Shinn P."/>
            <person name="Palm C.J."/>
            <person name="Southwick A.M."/>
            <person name="Wu H.C."/>
            <person name="Kim C.J."/>
            <person name="Nguyen M."/>
            <person name="Pham P.K."/>
            <person name="Cheuk R.F."/>
            <person name="Karlin-Newmann G."/>
            <person name="Liu S.X."/>
            <person name="Lam B."/>
            <person name="Sakano H."/>
            <person name="Wu T."/>
            <person name="Yu G."/>
            <person name="Miranda M."/>
            <person name="Quach H.L."/>
            <person name="Tripp M."/>
            <person name="Chang C.H."/>
            <person name="Lee J.M."/>
            <person name="Toriumi M.J."/>
            <person name="Chan M.M."/>
            <person name="Tang C.C."/>
            <person name="Onodera C.S."/>
            <person name="Deng J.M."/>
            <person name="Akiyama K."/>
            <person name="Ansari Y."/>
            <person name="Arakawa T."/>
            <person name="Banh J."/>
            <person name="Banno F."/>
            <person name="Bowser L."/>
            <person name="Brooks S.Y."/>
            <person name="Carninci P."/>
            <person name="Chao Q."/>
            <person name="Choy N."/>
            <person name="Enju A."/>
            <person name="Goldsmith A.D."/>
            <person name="Gurjal M."/>
            <person name="Hansen N.F."/>
            <person name="Hayashizaki Y."/>
            <person name="Johnson-Hopson C."/>
            <person name="Hsuan V.W."/>
            <person name="Iida K."/>
            <person name="Karnes M."/>
            <person name="Khan S."/>
            <person name="Koesema E."/>
            <person name="Ishida J."/>
            <person name="Jiang P.X."/>
            <person name="Jones T."/>
            <person name="Kawai J."/>
            <person name="Kamiya A."/>
            <person name="Meyers C."/>
            <person name="Nakajima M."/>
            <person name="Narusaka M."/>
            <person name="Seki M."/>
            <person name="Sakurai T."/>
            <person name="Satou M."/>
            <person name="Tamse R."/>
            <person name="Vaysberg M."/>
            <person name="Wallender E.K."/>
            <person name="Wong C."/>
            <person name="Yamamura Y."/>
            <person name="Yuan S."/>
            <person name="Shinozaki K."/>
            <person name="Davis R.W."/>
            <person name="Theologis A."/>
            <person name="Ecker J.R."/>
        </authorList>
    </citation>
    <scope>NUCLEOTIDE SEQUENCE [LARGE SCALE MRNA]</scope>
    <source>
        <strain>cv. Columbia</strain>
    </source>
</reference>
<reference key="4">
    <citation type="submission" date="2006-07" db="EMBL/GenBank/DDBJ databases">
        <title>Arabidopsis ORF clones.</title>
        <authorList>
            <person name="Kim C.J."/>
            <person name="Chen H."/>
            <person name="Quinitio C."/>
            <person name="Shinn P."/>
            <person name="Ecker J.R."/>
        </authorList>
    </citation>
    <scope>NUCLEOTIDE SEQUENCE [LARGE SCALE MRNA]</scope>
    <source>
        <strain>cv. Columbia</strain>
    </source>
</reference>
<reference key="5">
    <citation type="submission" date="2002-03" db="EMBL/GenBank/DDBJ databases">
        <title>Full-length cDNA from Arabidopsis thaliana.</title>
        <authorList>
            <person name="Brover V.V."/>
            <person name="Troukhan M.E."/>
            <person name="Alexandrov N.A."/>
            <person name="Lu Y.-P."/>
            <person name="Flavell R.B."/>
            <person name="Feldmann K.A."/>
        </authorList>
    </citation>
    <scope>NUCLEOTIDE SEQUENCE [LARGE SCALE MRNA]</scope>
</reference>
<reference key="6">
    <citation type="online journal article" date="1995" name="Plant Gene Register">
        <title>Three eukaryotic release factor one (eRF1) homologs from Arabidopsis thaliana Columbia.</title>
        <authorList>
            <person name="Brown C.M."/>
            <person name="Quigley F.R."/>
            <person name="Miller W.A."/>
        </authorList>
        <locator>PGR95-123</locator>
    </citation>
    <scope>NUCLEOTIDE SEQUENCE [MRNA] OF 131-434</scope>
    <source>
        <strain>cv. C24</strain>
        <tissue>Flower</tissue>
    </source>
</reference>
<reference key="7">
    <citation type="journal article" date="1993" name="Plant J.">
        <title>An inventory of 1152 expressed sequence tags obtained by partial sequencing of cDNAs from Arabidopsis thaliana.</title>
        <authorList>
            <person name="Hoefte H."/>
            <person name="Desprez T."/>
            <person name="Amselem J."/>
            <person name="Chiapello H."/>
            <person name="Rouze P."/>
            <person name="Caboche M."/>
            <person name="Moisan A."/>
            <person name="Jourjon M.-F."/>
            <person name="Charpenteau J.-L."/>
            <person name="Berthomieu P."/>
            <person name="Guerrier D."/>
            <person name="Giraudat J."/>
            <person name="Quigley F."/>
            <person name="Thomas F."/>
            <person name="Yu D.-Y."/>
            <person name="Mache R."/>
            <person name="Raynal M."/>
            <person name="Cooke R."/>
            <person name="Grellet F."/>
            <person name="Delseny M."/>
            <person name="Parmentier Y."/>
            <person name="de Marcillac G."/>
            <person name="Gigot C."/>
            <person name="Fleck J."/>
            <person name="Philipps G."/>
            <person name="Axelos M."/>
            <person name="Bardet C."/>
            <person name="Tremousaygue D."/>
            <person name="Lescure B."/>
        </authorList>
    </citation>
    <scope>NUCLEOTIDE SEQUENCE [LARGE SCALE MRNA] OF 131-201</scope>
    <source>
        <strain>cv. Columbia</strain>
        <tissue>Flower bud</tissue>
    </source>
</reference>
<reference key="8">
    <citation type="journal article" date="2004" name="Gene">
        <title>Translation termination in Arabidopsis thaliana: characterisation of three versions of release factor 1.</title>
        <authorList>
            <person name="Chapman B."/>
            <person name="Brown C."/>
        </authorList>
    </citation>
    <scope>FUNCTION</scope>
    <scope>MUTAGENESIS OF GLY-180</scope>
</reference>
<reference key="9">
    <citation type="journal article" date="2005" name="Plant Physiol.">
        <title>Cosuppression of eukaryotic release factor 1-1 in Arabidopsis affects cell elongation and radial cell division.</title>
        <authorList>
            <person name="Petsch K.A."/>
            <person name="Mylne J."/>
            <person name="Botella J.R."/>
        </authorList>
    </citation>
    <scope>FUNCTION</scope>
</reference>
<reference key="10">
    <citation type="journal article" date="2012" name="Mol. Cell. Proteomics">
        <title>Comparative large-scale characterisation of plant vs. mammal proteins reveals similar and idiosyncratic N-alpha acetylation features.</title>
        <authorList>
            <person name="Bienvenut W.V."/>
            <person name="Sumpton D."/>
            <person name="Martinez A."/>
            <person name="Lilla S."/>
            <person name="Espagne C."/>
            <person name="Meinnel T."/>
            <person name="Giglione C."/>
        </authorList>
    </citation>
    <scope>ACETYLATION [LARGE SCALE ANALYSIS] AT ALA-2</scope>
    <scope>CLEAVAGE OF INITIATOR METHIONINE [LARGE SCALE ANALYSIS]</scope>
    <scope>IDENTIFICATION BY MASS SPECTROMETRY [LARGE SCALE ANALYSIS]</scope>
</reference>
<sequence length="434" mass="48941">MAEEADTNIEIWKIKKLIKGLESARGNGTSMISLIMPPRDQVSRVTKMLGDEYGTASNIKSRVNRQSVLSAITSAQQRLKLYNKVPTNGLVLYTGTIVNDDGKEKKVTFDFEPFRPINASLYLCDNKFHTEALNELLESDDKFGFIVMDGNGTLFGTLSGNTREVLHKFTVDLPKKHGRGGQSALRFARLRMEKRHNYVRKTAELATQFYINPATSQPNVSGLILAGSADFKTELSQSELFDPRLQAKILNVVDVSYGGENGFNQAIELSAEILSNVKFIQEKKLIGKYFEEISQDTGKYVFGVEDTLKALEMGAIETLIVWENLDINRYELKNSTTGEMVVKHFGKDQESDTSNFHDSETNAELEVQEKMPLLEWFANEYKRFGCTLEFVTNKSQEGSQFCRGFGGIGGMLRYQLDMRTFDELSDTEVYEDSD</sequence>
<feature type="initiator methionine" description="Removed" evidence="8">
    <location>
        <position position="1"/>
    </location>
</feature>
<feature type="chain" id="PRO_0000143163" description="Eukaryotic peptide chain release factor subunit 1-2">
    <location>
        <begin position="2"/>
        <end position="434"/>
    </location>
</feature>
<feature type="modified residue" description="N-acetylalanine" evidence="8">
    <location>
        <position position="2"/>
    </location>
</feature>
<feature type="mutagenesis site" description="Loss of peptidyl-tRNA hydrolytic activity." evidence="1">
    <original>G</original>
    <variation>A</variation>
    <location>
        <position position="180"/>
    </location>
</feature>
<proteinExistence type="evidence at protein level"/>
<organism>
    <name type="scientific">Arabidopsis thaliana</name>
    <name type="common">Mouse-ear cress</name>
    <dbReference type="NCBI Taxonomy" id="3702"/>
    <lineage>
        <taxon>Eukaryota</taxon>
        <taxon>Viridiplantae</taxon>
        <taxon>Streptophyta</taxon>
        <taxon>Embryophyta</taxon>
        <taxon>Tracheophyta</taxon>
        <taxon>Spermatophyta</taxon>
        <taxon>Magnoliopsida</taxon>
        <taxon>eudicotyledons</taxon>
        <taxon>Gunneridae</taxon>
        <taxon>Pentapetalae</taxon>
        <taxon>rosids</taxon>
        <taxon>malvids</taxon>
        <taxon>Brassicales</taxon>
        <taxon>Brassicaceae</taxon>
        <taxon>Camelineae</taxon>
        <taxon>Arabidopsis</taxon>
    </lineage>
</organism>